<proteinExistence type="inferred from homology"/>
<keyword id="KW-0067">ATP-binding</keyword>
<keyword id="KW-0963">Cytoplasm</keyword>
<keyword id="KW-0235">DNA replication</keyword>
<keyword id="KW-0238">DNA-binding</keyword>
<keyword id="KW-0446">Lipid-binding</keyword>
<keyword id="KW-0547">Nucleotide-binding</keyword>
<keyword id="KW-1185">Reference proteome</keyword>
<comment type="function">
    <text evidence="1">Plays an essential role in the initiation and regulation of chromosomal replication. ATP-DnaA binds to the origin of replication (oriC) to initiate formation of the DNA replication initiation complex once per cell cycle. Binds the DnaA box (a 9 base pair repeat at the origin) and separates the double-stranded (ds)DNA. Forms a right-handed helical filament on oriC DNA; dsDNA binds to the exterior of the filament while single-stranded (ss)DNA is stabiized in the filament's interior. The ATP-DnaA-oriC complex binds and stabilizes one strand of the AT-rich DNA unwinding element (DUE), permitting loading of DNA polymerase. After initiation quickly degrades to an ADP-DnaA complex that is not apt for DNA replication. Binds acidic phospholipids.</text>
</comment>
<comment type="subunit">
    <text evidence="1">Oligomerizes as a right-handed, spiral filament on DNA at oriC.</text>
</comment>
<comment type="subcellular location">
    <subcellularLocation>
        <location evidence="1">Cytoplasm</location>
    </subcellularLocation>
</comment>
<comment type="domain">
    <text evidence="1">Domain I is involved in oligomerization and binding regulators, domain II is flexibile and of varying length in different bacteria, domain III forms the AAA+ region, while domain IV binds dsDNA.</text>
</comment>
<comment type="similarity">
    <text evidence="1">Belongs to the DnaA family.</text>
</comment>
<reference key="1">
    <citation type="submission" date="2007-03" db="EMBL/GenBank/DDBJ databases">
        <title>Complete sequence of Desulfotomaculum reducens MI-1.</title>
        <authorList>
            <consortium name="US DOE Joint Genome Institute"/>
            <person name="Copeland A."/>
            <person name="Lucas S."/>
            <person name="Lapidus A."/>
            <person name="Barry K."/>
            <person name="Detter J.C."/>
            <person name="Glavina del Rio T."/>
            <person name="Hammon N."/>
            <person name="Israni S."/>
            <person name="Dalin E."/>
            <person name="Tice H."/>
            <person name="Pitluck S."/>
            <person name="Sims D."/>
            <person name="Brettin T."/>
            <person name="Bruce D."/>
            <person name="Han C."/>
            <person name="Tapia R."/>
            <person name="Schmutz J."/>
            <person name="Larimer F."/>
            <person name="Land M."/>
            <person name="Hauser L."/>
            <person name="Kyrpides N."/>
            <person name="Kim E."/>
            <person name="Tebo B.M."/>
            <person name="Richardson P."/>
        </authorList>
    </citation>
    <scope>NUCLEOTIDE SEQUENCE [LARGE SCALE GENOMIC DNA]</scope>
    <source>
        <strain>ATCC BAA-1160 / DSM 100696 / MI-1</strain>
    </source>
</reference>
<sequence>MQNDVLARWEQVLIRLEKQVNKHSFETWLTKCKPVAFYDNTIIIEVPDHFSKSWLADRYAPIIKQAYESIMHQEISLQFILAGQEVDQPKPKERSSEETYINILNPRYTFDTFVVGNSNRFAHAASLAVAESPAKAYNPLFIYGGVGLGKTHLMHAIGHYILENNQNLKVAYVTSEKFTNELINSIRDDQTVEFRNKYRSMDILLIDDIQFLEKKERTQEEFFHTFNTLYEANKQIIISSDRPPKEIATLEDRLRSRFEWGLITDMQSPDYETRVAILRKKAQLEAIKNIPDETIAYIADKIQSNIRELEGALIRVSAFSSLEQRDATPQLAAEVLKDVIAPSKPKIITTPLIMQTVADFYGLRIEDLKAKKRTRSVAFPRQVAMYLARELTDLSLPKIGDEFGGRDHTTVLHACDKITTDLSSDPVLQETIKELKKRIGE</sequence>
<dbReference type="EMBL" id="CP000612">
    <property type="protein sequence ID" value="ABO48553.1"/>
    <property type="molecule type" value="Genomic_DNA"/>
</dbReference>
<dbReference type="RefSeq" id="WP_011876397.1">
    <property type="nucleotide sequence ID" value="NC_009253.1"/>
</dbReference>
<dbReference type="SMR" id="A4J0F0"/>
<dbReference type="STRING" id="349161.Dred_0001"/>
<dbReference type="KEGG" id="drm:Dred_0001"/>
<dbReference type="eggNOG" id="COG0593">
    <property type="taxonomic scope" value="Bacteria"/>
</dbReference>
<dbReference type="HOGENOM" id="CLU_026910_3_1_9"/>
<dbReference type="OrthoDB" id="9807019at2"/>
<dbReference type="Proteomes" id="UP000001556">
    <property type="component" value="Chromosome"/>
</dbReference>
<dbReference type="GO" id="GO:0005737">
    <property type="term" value="C:cytoplasm"/>
    <property type="evidence" value="ECO:0007669"/>
    <property type="project" value="UniProtKB-SubCell"/>
</dbReference>
<dbReference type="GO" id="GO:0005886">
    <property type="term" value="C:plasma membrane"/>
    <property type="evidence" value="ECO:0007669"/>
    <property type="project" value="TreeGrafter"/>
</dbReference>
<dbReference type="GO" id="GO:0005524">
    <property type="term" value="F:ATP binding"/>
    <property type="evidence" value="ECO:0007669"/>
    <property type="project" value="UniProtKB-UniRule"/>
</dbReference>
<dbReference type="GO" id="GO:0016887">
    <property type="term" value="F:ATP hydrolysis activity"/>
    <property type="evidence" value="ECO:0007669"/>
    <property type="project" value="InterPro"/>
</dbReference>
<dbReference type="GO" id="GO:0003688">
    <property type="term" value="F:DNA replication origin binding"/>
    <property type="evidence" value="ECO:0007669"/>
    <property type="project" value="UniProtKB-UniRule"/>
</dbReference>
<dbReference type="GO" id="GO:0008289">
    <property type="term" value="F:lipid binding"/>
    <property type="evidence" value="ECO:0007669"/>
    <property type="project" value="UniProtKB-KW"/>
</dbReference>
<dbReference type="GO" id="GO:0006270">
    <property type="term" value="P:DNA replication initiation"/>
    <property type="evidence" value="ECO:0007669"/>
    <property type="project" value="UniProtKB-UniRule"/>
</dbReference>
<dbReference type="GO" id="GO:0006275">
    <property type="term" value="P:regulation of DNA replication"/>
    <property type="evidence" value="ECO:0007669"/>
    <property type="project" value="UniProtKB-UniRule"/>
</dbReference>
<dbReference type="CDD" id="cd00009">
    <property type="entry name" value="AAA"/>
    <property type="match status" value="1"/>
</dbReference>
<dbReference type="CDD" id="cd06571">
    <property type="entry name" value="Bac_DnaA_C"/>
    <property type="match status" value="1"/>
</dbReference>
<dbReference type="FunFam" id="1.10.1750.10:FF:000002">
    <property type="entry name" value="Chromosomal replication initiator protein DnaA"/>
    <property type="match status" value="1"/>
</dbReference>
<dbReference type="FunFam" id="1.10.8.60:FF:000003">
    <property type="entry name" value="Chromosomal replication initiator protein DnaA"/>
    <property type="match status" value="1"/>
</dbReference>
<dbReference type="FunFam" id="3.40.50.300:FF:000150">
    <property type="entry name" value="Chromosomal replication initiator protein DnaA"/>
    <property type="match status" value="1"/>
</dbReference>
<dbReference type="Gene3D" id="1.10.1750.10">
    <property type="match status" value="1"/>
</dbReference>
<dbReference type="Gene3D" id="1.10.8.60">
    <property type="match status" value="1"/>
</dbReference>
<dbReference type="Gene3D" id="3.30.300.180">
    <property type="match status" value="1"/>
</dbReference>
<dbReference type="Gene3D" id="3.40.50.300">
    <property type="entry name" value="P-loop containing nucleotide triphosphate hydrolases"/>
    <property type="match status" value="1"/>
</dbReference>
<dbReference type="HAMAP" id="MF_00377">
    <property type="entry name" value="DnaA_bact"/>
    <property type="match status" value="1"/>
</dbReference>
<dbReference type="InterPro" id="IPR003593">
    <property type="entry name" value="AAA+_ATPase"/>
</dbReference>
<dbReference type="InterPro" id="IPR001957">
    <property type="entry name" value="Chromosome_initiator_DnaA"/>
</dbReference>
<dbReference type="InterPro" id="IPR020591">
    <property type="entry name" value="Chromosome_initiator_DnaA-like"/>
</dbReference>
<dbReference type="InterPro" id="IPR018312">
    <property type="entry name" value="Chromosome_initiator_DnaA_CS"/>
</dbReference>
<dbReference type="InterPro" id="IPR013159">
    <property type="entry name" value="DnaA_C"/>
</dbReference>
<dbReference type="InterPro" id="IPR013317">
    <property type="entry name" value="DnaA_dom"/>
</dbReference>
<dbReference type="InterPro" id="IPR024633">
    <property type="entry name" value="DnaA_N_dom"/>
</dbReference>
<dbReference type="InterPro" id="IPR038454">
    <property type="entry name" value="DnaA_N_sf"/>
</dbReference>
<dbReference type="InterPro" id="IPR027417">
    <property type="entry name" value="P-loop_NTPase"/>
</dbReference>
<dbReference type="InterPro" id="IPR010921">
    <property type="entry name" value="Trp_repressor/repl_initiator"/>
</dbReference>
<dbReference type="NCBIfam" id="TIGR00362">
    <property type="entry name" value="DnaA"/>
    <property type="match status" value="1"/>
</dbReference>
<dbReference type="NCBIfam" id="NF010686">
    <property type="entry name" value="PRK14086.1"/>
    <property type="match status" value="1"/>
</dbReference>
<dbReference type="PANTHER" id="PTHR30050">
    <property type="entry name" value="CHROMOSOMAL REPLICATION INITIATOR PROTEIN DNAA"/>
    <property type="match status" value="1"/>
</dbReference>
<dbReference type="PANTHER" id="PTHR30050:SF2">
    <property type="entry name" value="CHROMOSOMAL REPLICATION INITIATOR PROTEIN DNAA"/>
    <property type="match status" value="1"/>
</dbReference>
<dbReference type="Pfam" id="PF00308">
    <property type="entry name" value="Bac_DnaA"/>
    <property type="match status" value="1"/>
</dbReference>
<dbReference type="Pfam" id="PF08299">
    <property type="entry name" value="Bac_DnaA_C"/>
    <property type="match status" value="1"/>
</dbReference>
<dbReference type="Pfam" id="PF11638">
    <property type="entry name" value="DnaA_N"/>
    <property type="match status" value="1"/>
</dbReference>
<dbReference type="PRINTS" id="PR00051">
    <property type="entry name" value="DNAA"/>
</dbReference>
<dbReference type="SMART" id="SM00382">
    <property type="entry name" value="AAA"/>
    <property type="match status" value="1"/>
</dbReference>
<dbReference type="SMART" id="SM00760">
    <property type="entry name" value="Bac_DnaA_C"/>
    <property type="match status" value="1"/>
</dbReference>
<dbReference type="SUPFAM" id="SSF52540">
    <property type="entry name" value="P-loop containing nucleoside triphosphate hydrolases"/>
    <property type="match status" value="1"/>
</dbReference>
<dbReference type="SUPFAM" id="SSF48295">
    <property type="entry name" value="TrpR-like"/>
    <property type="match status" value="1"/>
</dbReference>
<dbReference type="PROSITE" id="PS01008">
    <property type="entry name" value="DNAA"/>
    <property type="match status" value="1"/>
</dbReference>
<evidence type="ECO:0000255" key="1">
    <source>
        <dbReference type="HAMAP-Rule" id="MF_00377"/>
    </source>
</evidence>
<name>DNAA_DESRM</name>
<feature type="chain" id="PRO_1000072156" description="Chromosomal replication initiator protein DnaA">
    <location>
        <begin position="1"/>
        <end position="441"/>
    </location>
</feature>
<feature type="region of interest" description="Domain I, interacts with DnaA modulators" evidence="1">
    <location>
        <begin position="1"/>
        <end position="80"/>
    </location>
</feature>
<feature type="region of interest" description="Domain II" evidence="1">
    <location>
        <begin position="80"/>
        <end position="102"/>
    </location>
</feature>
<feature type="region of interest" description="Domain III, AAA+ region" evidence="1">
    <location>
        <begin position="103"/>
        <end position="320"/>
    </location>
</feature>
<feature type="region of interest" description="Domain IV, binds dsDNA" evidence="1">
    <location>
        <begin position="321"/>
        <end position="441"/>
    </location>
</feature>
<feature type="binding site" evidence="1">
    <location>
        <position position="147"/>
    </location>
    <ligand>
        <name>ATP</name>
        <dbReference type="ChEBI" id="CHEBI:30616"/>
    </ligand>
</feature>
<feature type="binding site" evidence="1">
    <location>
        <position position="149"/>
    </location>
    <ligand>
        <name>ATP</name>
        <dbReference type="ChEBI" id="CHEBI:30616"/>
    </ligand>
</feature>
<feature type="binding site" evidence="1">
    <location>
        <position position="150"/>
    </location>
    <ligand>
        <name>ATP</name>
        <dbReference type="ChEBI" id="CHEBI:30616"/>
    </ligand>
</feature>
<feature type="binding site" evidence="1">
    <location>
        <position position="151"/>
    </location>
    <ligand>
        <name>ATP</name>
        <dbReference type="ChEBI" id="CHEBI:30616"/>
    </ligand>
</feature>
<protein>
    <recommendedName>
        <fullName evidence="1">Chromosomal replication initiator protein DnaA</fullName>
    </recommendedName>
</protein>
<gene>
    <name evidence="1" type="primary">dnaA</name>
    <name type="ordered locus">Dred_0001</name>
</gene>
<accession>A4J0F0</accession>
<organism>
    <name type="scientific">Desulforamulus reducens (strain ATCC BAA-1160 / DSM 100696 / MI-1)</name>
    <name type="common">Desulfotomaculum reducens</name>
    <dbReference type="NCBI Taxonomy" id="349161"/>
    <lineage>
        <taxon>Bacteria</taxon>
        <taxon>Bacillati</taxon>
        <taxon>Bacillota</taxon>
        <taxon>Clostridia</taxon>
        <taxon>Eubacteriales</taxon>
        <taxon>Peptococcaceae</taxon>
        <taxon>Desulforamulus</taxon>
    </lineage>
</organism>